<dbReference type="EC" id="3.1.26.4" evidence="1"/>
<dbReference type="EMBL" id="CP000890">
    <property type="protein sequence ID" value="ABX77470.1"/>
    <property type="molecule type" value="Genomic_DNA"/>
</dbReference>
<dbReference type="RefSeq" id="WP_010957501.1">
    <property type="nucleotide sequence ID" value="NC_010117.1"/>
</dbReference>
<dbReference type="SMR" id="A9NB52"/>
<dbReference type="KEGG" id="cbs:COXBURSA331_A0424"/>
<dbReference type="HOGENOM" id="CLU_030894_6_0_6"/>
<dbReference type="GO" id="GO:0005737">
    <property type="term" value="C:cytoplasm"/>
    <property type="evidence" value="ECO:0007669"/>
    <property type="project" value="UniProtKB-SubCell"/>
</dbReference>
<dbReference type="GO" id="GO:0000287">
    <property type="term" value="F:magnesium ion binding"/>
    <property type="evidence" value="ECO:0007669"/>
    <property type="project" value="UniProtKB-UniRule"/>
</dbReference>
<dbReference type="GO" id="GO:0003676">
    <property type="term" value="F:nucleic acid binding"/>
    <property type="evidence" value="ECO:0007669"/>
    <property type="project" value="InterPro"/>
</dbReference>
<dbReference type="GO" id="GO:0004523">
    <property type="term" value="F:RNA-DNA hybrid ribonuclease activity"/>
    <property type="evidence" value="ECO:0007669"/>
    <property type="project" value="UniProtKB-UniRule"/>
</dbReference>
<dbReference type="GO" id="GO:0043137">
    <property type="term" value="P:DNA replication, removal of RNA primer"/>
    <property type="evidence" value="ECO:0007669"/>
    <property type="project" value="TreeGrafter"/>
</dbReference>
<dbReference type="CDD" id="cd09278">
    <property type="entry name" value="RNase_HI_prokaryote_like"/>
    <property type="match status" value="1"/>
</dbReference>
<dbReference type="FunFam" id="3.30.420.10:FF:000089">
    <property type="entry name" value="Ribonuclease H"/>
    <property type="match status" value="1"/>
</dbReference>
<dbReference type="Gene3D" id="3.30.420.10">
    <property type="entry name" value="Ribonuclease H-like superfamily/Ribonuclease H"/>
    <property type="match status" value="1"/>
</dbReference>
<dbReference type="HAMAP" id="MF_00042">
    <property type="entry name" value="RNase_H"/>
    <property type="match status" value="1"/>
</dbReference>
<dbReference type="InterPro" id="IPR050092">
    <property type="entry name" value="RNase_H"/>
</dbReference>
<dbReference type="InterPro" id="IPR012337">
    <property type="entry name" value="RNaseH-like_sf"/>
</dbReference>
<dbReference type="InterPro" id="IPR002156">
    <property type="entry name" value="RNaseH_domain"/>
</dbReference>
<dbReference type="InterPro" id="IPR036397">
    <property type="entry name" value="RNaseH_sf"/>
</dbReference>
<dbReference type="InterPro" id="IPR022892">
    <property type="entry name" value="RNaseHI"/>
</dbReference>
<dbReference type="NCBIfam" id="NF001236">
    <property type="entry name" value="PRK00203.1"/>
    <property type="match status" value="1"/>
</dbReference>
<dbReference type="PANTHER" id="PTHR10642">
    <property type="entry name" value="RIBONUCLEASE H1"/>
    <property type="match status" value="1"/>
</dbReference>
<dbReference type="PANTHER" id="PTHR10642:SF26">
    <property type="entry name" value="RIBONUCLEASE H1"/>
    <property type="match status" value="1"/>
</dbReference>
<dbReference type="Pfam" id="PF00075">
    <property type="entry name" value="RNase_H"/>
    <property type="match status" value="1"/>
</dbReference>
<dbReference type="SUPFAM" id="SSF53098">
    <property type="entry name" value="Ribonuclease H-like"/>
    <property type="match status" value="1"/>
</dbReference>
<dbReference type="PROSITE" id="PS50879">
    <property type="entry name" value="RNASE_H_1"/>
    <property type="match status" value="1"/>
</dbReference>
<comment type="function">
    <text evidence="1">Endonuclease that specifically degrades the RNA of RNA-DNA hybrids.</text>
</comment>
<comment type="catalytic activity">
    <reaction evidence="1">
        <text>Endonucleolytic cleavage to 5'-phosphomonoester.</text>
        <dbReference type="EC" id="3.1.26.4"/>
    </reaction>
</comment>
<comment type="cofactor">
    <cofactor evidence="1">
        <name>Mg(2+)</name>
        <dbReference type="ChEBI" id="CHEBI:18420"/>
    </cofactor>
    <text evidence="1">Binds 1 Mg(2+) ion per subunit. May bind a second metal ion at a regulatory site, or after substrate binding.</text>
</comment>
<comment type="subunit">
    <text evidence="1">Monomer.</text>
</comment>
<comment type="subcellular location">
    <subcellularLocation>
        <location evidence="1">Cytoplasm</location>
    </subcellularLocation>
</comment>
<comment type="similarity">
    <text evidence="1">Belongs to the RNase H family.</text>
</comment>
<feature type="chain" id="PRO_0000332586" description="Ribonuclease H">
    <location>
        <begin position="1"/>
        <end position="154"/>
    </location>
</feature>
<feature type="domain" description="RNase H type-1" evidence="2">
    <location>
        <begin position="5"/>
        <end position="146"/>
    </location>
</feature>
<feature type="binding site" evidence="1">
    <location>
        <position position="14"/>
    </location>
    <ligand>
        <name>Mg(2+)</name>
        <dbReference type="ChEBI" id="CHEBI:18420"/>
        <label>1</label>
    </ligand>
</feature>
<feature type="binding site" evidence="1">
    <location>
        <position position="14"/>
    </location>
    <ligand>
        <name>Mg(2+)</name>
        <dbReference type="ChEBI" id="CHEBI:18420"/>
        <label>2</label>
    </ligand>
</feature>
<feature type="binding site" evidence="1">
    <location>
        <position position="52"/>
    </location>
    <ligand>
        <name>Mg(2+)</name>
        <dbReference type="ChEBI" id="CHEBI:18420"/>
        <label>1</label>
    </ligand>
</feature>
<feature type="binding site" evidence="1">
    <location>
        <position position="74"/>
    </location>
    <ligand>
        <name>Mg(2+)</name>
        <dbReference type="ChEBI" id="CHEBI:18420"/>
        <label>1</label>
    </ligand>
</feature>
<feature type="binding site" evidence="1">
    <location>
        <position position="138"/>
    </location>
    <ligand>
        <name>Mg(2+)</name>
        <dbReference type="ChEBI" id="CHEBI:18420"/>
        <label>2</label>
    </ligand>
</feature>
<evidence type="ECO:0000255" key="1">
    <source>
        <dbReference type="HAMAP-Rule" id="MF_00042"/>
    </source>
</evidence>
<evidence type="ECO:0000255" key="2">
    <source>
        <dbReference type="PROSITE-ProRule" id="PRU00408"/>
    </source>
</evidence>
<organism>
    <name type="scientific">Coxiella burnetii (strain RSA 331 / Henzerling II)</name>
    <dbReference type="NCBI Taxonomy" id="360115"/>
    <lineage>
        <taxon>Bacteria</taxon>
        <taxon>Pseudomonadati</taxon>
        <taxon>Pseudomonadota</taxon>
        <taxon>Gammaproteobacteria</taxon>
        <taxon>Legionellales</taxon>
        <taxon>Coxiellaceae</taxon>
        <taxon>Coxiella</taxon>
    </lineage>
</organism>
<keyword id="KW-0963">Cytoplasm</keyword>
<keyword id="KW-0255">Endonuclease</keyword>
<keyword id="KW-0378">Hydrolase</keyword>
<keyword id="KW-0460">Magnesium</keyword>
<keyword id="KW-0479">Metal-binding</keyword>
<keyword id="KW-0540">Nuclease</keyword>
<sequence>MAKQEQNIVYLYCDGACRGNPGPGGWGVLLRYNQHERQLHGGVANTTNNQMELTAAIEGLKSLKKPCQVVVTTDSQYLRRGITEWLPVWKRRGWRTSNKKPVKNQPLWETLEREVERHTIVWHWVKGHSGHAENEIADELANRGIDEVLKRGVQ</sequence>
<proteinExistence type="inferred from homology"/>
<protein>
    <recommendedName>
        <fullName evidence="1">Ribonuclease H</fullName>
        <shortName evidence="1">RNase H</shortName>
        <ecNumber evidence="1">3.1.26.4</ecNumber>
    </recommendedName>
</protein>
<accession>A9NB52</accession>
<gene>
    <name evidence="1" type="primary">rnhA</name>
    <name type="ordered locus">COXBURSA331_A0424</name>
</gene>
<name>RNH_COXBR</name>
<reference key="1">
    <citation type="submission" date="2007-11" db="EMBL/GenBank/DDBJ databases">
        <title>Genome sequencing of phylogenetically and phenotypically diverse Coxiella burnetii isolates.</title>
        <authorList>
            <person name="Seshadri R."/>
            <person name="Samuel J.E."/>
        </authorList>
    </citation>
    <scope>NUCLEOTIDE SEQUENCE [LARGE SCALE GENOMIC DNA]</scope>
    <source>
        <strain>RSA 331 / Henzerling II</strain>
    </source>
</reference>